<feature type="signal peptide" evidence="1">
    <location>
        <begin position="1"/>
        <end position="21"/>
    </location>
</feature>
<feature type="chain" id="PRO_0000272028" description="Protein YddL">
    <location>
        <begin position="22"/>
        <end position="96"/>
    </location>
</feature>
<proteinExistence type="inferred from homology"/>
<name>YDDL_ECOLI</name>
<reference key="1">
    <citation type="journal article" date="1997" name="Science">
        <title>The complete genome sequence of Escherichia coli K-12.</title>
        <authorList>
            <person name="Blattner F.R."/>
            <person name="Plunkett G. III"/>
            <person name="Bloch C.A."/>
            <person name="Perna N.T."/>
            <person name="Burland V."/>
            <person name="Riley M."/>
            <person name="Collado-Vides J."/>
            <person name="Glasner J.D."/>
            <person name="Rode C.K."/>
            <person name="Mayhew G.F."/>
            <person name="Gregor J."/>
            <person name="Davis N.W."/>
            <person name="Kirkpatrick H.A."/>
            <person name="Goeden M.A."/>
            <person name="Rose D.J."/>
            <person name="Mau B."/>
            <person name="Shao Y."/>
        </authorList>
    </citation>
    <scope>NUCLEOTIDE SEQUENCE [LARGE SCALE GENOMIC DNA]</scope>
    <source>
        <strain>K12 / MG1655 / ATCC 47076</strain>
    </source>
</reference>
<reference key="2">
    <citation type="journal article" date="2006" name="Mol. Syst. Biol.">
        <title>Highly accurate genome sequences of Escherichia coli K-12 strains MG1655 and W3110.</title>
        <authorList>
            <person name="Hayashi K."/>
            <person name="Morooka N."/>
            <person name="Yamamoto Y."/>
            <person name="Fujita K."/>
            <person name="Isono K."/>
            <person name="Choi S."/>
            <person name="Ohtsubo E."/>
            <person name="Baba T."/>
            <person name="Wanner B.L."/>
            <person name="Mori H."/>
            <person name="Horiuchi T."/>
        </authorList>
    </citation>
    <scope>NUCLEOTIDE SEQUENCE [LARGE SCALE GENOMIC DNA]</scope>
    <source>
        <strain>K12 / W3110 / ATCC 27325 / DSM 5911</strain>
    </source>
</reference>
<comment type="miscellaneous">
    <text evidence="2">May be missing up to 300 C-terminal residues compared to other porins.</text>
</comment>
<evidence type="ECO:0000255" key="1"/>
<evidence type="ECO:0000305" key="2"/>
<keyword id="KW-1185">Reference proteome</keyword>
<keyword id="KW-0732">Signal</keyword>
<dbReference type="EMBL" id="U00096">
    <property type="protein sequence ID" value="AYC08210.1"/>
    <property type="molecule type" value="Genomic_DNA"/>
</dbReference>
<dbReference type="EMBL" id="AP009048">
    <property type="protein sequence ID" value="BAA15121.1"/>
    <property type="molecule type" value="Genomic_DNA"/>
</dbReference>
<dbReference type="PIR" id="C64900">
    <property type="entry name" value="C64900"/>
</dbReference>
<dbReference type="SMR" id="P77519"/>
<dbReference type="BioGRID" id="4262918">
    <property type="interactions" value="172"/>
</dbReference>
<dbReference type="FunCoup" id="P77519">
    <property type="interactions" value="206"/>
</dbReference>
<dbReference type="IntAct" id="P77519">
    <property type="interactions" value="1"/>
</dbReference>
<dbReference type="EnsemblBacteria" id="AYC08210">
    <property type="protein sequence ID" value="AYC08210"/>
    <property type="gene ID" value="b1472"/>
</dbReference>
<dbReference type="KEGG" id="ecj:JW1468"/>
<dbReference type="KEGG" id="ecoc:C3026_08535"/>
<dbReference type="PATRIC" id="fig|83333.103.peg.2298"/>
<dbReference type="eggNOG" id="COG3203">
    <property type="taxonomic scope" value="Bacteria"/>
</dbReference>
<dbReference type="HOGENOM" id="CLU_058202_4_0_6"/>
<dbReference type="InParanoid" id="P77519"/>
<dbReference type="OMA" id="GLCWSEI"/>
<dbReference type="OrthoDB" id="7055111at2"/>
<dbReference type="BioCyc" id="EcoCyc:G6773-MONOMER"/>
<dbReference type="PRO" id="PR:P77519"/>
<dbReference type="Proteomes" id="UP000000625">
    <property type="component" value="Chromosome"/>
</dbReference>
<dbReference type="GO" id="GO:0009279">
    <property type="term" value="C:cell outer membrane"/>
    <property type="evidence" value="ECO:0007669"/>
    <property type="project" value="InterPro"/>
</dbReference>
<dbReference type="GO" id="GO:0015288">
    <property type="term" value="F:porin activity"/>
    <property type="evidence" value="ECO:0007669"/>
    <property type="project" value="InterPro"/>
</dbReference>
<dbReference type="GO" id="GO:0034220">
    <property type="term" value="P:monoatomic ion transmembrane transport"/>
    <property type="evidence" value="ECO:0007669"/>
    <property type="project" value="InterPro"/>
</dbReference>
<dbReference type="Gene3D" id="2.40.160.10">
    <property type="entry name" value="Porin"/>
    <property type="match status" value="1"/>
</dbReference>
<dbReference type="InterPro" id="IPR050298">
    <property type="entry name" value="Gram-neg_bact_OMP"/>
</dbReference>
<dbReference type="InterPro" id="IPR023614">
    <property type="entry name" value="Porin_dom_sf"/>
</dbReference>
<dbReference type="InterPro" id="IPR001897">
    <property type="entry name" value="Porin_gammaproteobac"/>
</dbReference>
<dbReference type="InterPro" id="IPR001702">
    <property type="entry name" value="Porin_Gram-ve"/>
</dbReference>
<dbReference type="PANTHER" id="PTHR34501:SF2">
    <property type="entry name" value="OUTER MEMBRANE PORIN F-RELATED"/>
    <property type="match status" value="1"/>
</dbReference>
<dbReference type="PANTHER" id="PTHR34501">
    <property type="entry name" value="PROTEIN YDDL-RELATED"/>
    <property type="match status" value="1"/>
</dbReference>
<dbReference type="Pfam" id="PF00267">
    <property type="entry name" value="Porin_1"/>
    <property type="match status" value="1"/>
</dbReference>
<dbReference type="PRINTS" id="PR00183">
    <property type="entry name" value="ECOLIPORIN"/>
</dbReference>
<dbReference type="SUPFAM" id="SSF56935">
    <property type="entry name" value="Porins"/>
    <property type="match status" value="1"/>
</dbReference>
<organism>
    <name type="scientific">Escherichia coli (strain K12)</name>
    <dbReference type="NCBI Taxonomy" id="83333"/>
    <lineage>
        <taxon>Bacteria</taxon>
        <taxon>Pseudomonadati</taxon>
        <taxon>Pseudomonadota</taxon>
        <taxon>Gammaproteobacteria</taxon>
        <taxon>Enterobacterales</taxon>
        <taxon>Enterobacteriaceae</taxon>
        <taxon>Escherichia</taxon>
    </lineage>
</organism>
<gene>
    <name type="primary">yddL</name>
    <name type="ordered locus">b1472</name>
    <name type="ordered locus">JW1468</name>
</gene>
<protein>
    <recommendedName>
        <fullName>Protein YddL</fullName>
    </recommendedName>
</protein>
<sequence length="96" mass="10736">MKLKIVAVVVTGLLAANVAHAAEVYNKDGNKLDLYGKVTALRYFTDDKRDDGDKTYARLGFKGETQINDQMIGFGHWEYDFKGYNDEANGSRGKNL</sequence>
<accession>P77519</accession>
<accession>A0A385XJG8</accession>
<accession>Q79EJ6</accession>